<accession>O31715</accession>
<name>YKOA_BACSU</name>
<sequence>MRLLTLTEYCLLIFFTGFYLAVTGFTAKDIGLYIGIALIYIFSHIFSKRLLEKRGKENKQVHLFFSVLAIIGSVFITVLCIALVASFSK</sequence>
<feature type="chain" id="PRO_0000049607" description="Uncharacterized protein YkoA">
    <location>
        <begin position="1"/>
        <end position="89"/>
    </location>
</feature>
<feature type="transmembrane region" description="Helical" evidence="1">
    <location>
        <begin position="5"/>
        <end position="27"/>
    </location>
</feature>
<feature type="transmembrane region" description="Helical" evidence="1">
    <location>
        <begin position="32"/>
        <end position="51"/>
    </location>
</feature>
<feature type="transmembrane region" description="Helical" evidence="1">
    <location>
        <begin position="63"/>
        <end position="85"/>
    </location>
</feature>
<evidence type="ECO:0000255" key="1"/>
<evidence type="ECO:0000305" key="2"/>
<dbReference type="EMBL" id="AF012285">
    <property type="protein sequence ID" value="AAC24917.1"/>
    <property type="molecule type" value="Genomic_DNA"/>
</dbReference>
<dbReference type="EMBL" id="AL009126">
    <property type="protein sequence ID" value="CAB13315.1"/>
    <property type="molecule type" value="Genomic_DNA"/>
</dbReference>
<dbReference type="PIR" id="F69858">
    <property type="entry name" value="F69858"/>
</dbReference>
<dbReference type="RefSeq" id="NP_389325.1">
    <property type="nucleotide sequence ID" value="NC_000964.3"/>
</dbReference>
<dbReference type="RefSeq" id="WP_003232345.1">
    <property type="nucleotide sequence ID" value="NZ_OZ025638.1"/>
</dbReference>
<dbReference type="FunCoup" id="O31715">
    <property type="interactions" value="99"/>
</dbReference>
<dbReference type="STRING" id="224308.BSU14420"/>
<dbReference type="PaxDb" id="224308-BSU14420"/>
<dbReference type="EnsemblBacteria" id="CAB13315">
    <property type="protein sequence ID" value="CAB13315"/>
    <property type="gene ID" value="BSU_14420"/>
</dbReference>
<dbReference type="GeneID" id="938768"/>
<dbReference type="KEGG" id="bsu:BSU14420"/>
<dbReference type="PATRIC" id="fig|224308.179.peg.1572"/>
<dbReference type="eggNOG" id="ENOG5030CVY">
    <property type="taxonomic scope" value="Bacteria"/>
</dbReference>
<dbReference type="InParanoid" id="O31715"/>
<dbReference type="OrthoDB" id="2923255at2"/>
<dbReference type="BioCyc" id="BSUB:BSU14420-MONOMER"/>
<dbReference type="Proteomes" id="UP000001570">
    <property type="component" value="Chromosome"/>
</dbReference>
<dbReference type="GO" id="GO:0005886">
    <property type="term" value="C:plasma membrane"/>
    <property type="evidence" value="ECO:0007669"/>
    <property type="project" value="UniProtKB-SubCell"/>
</dbReference>
<proteinExistence type="predicted"/>
<reference key="1">
    <citation type="submission" date="1997-07" db="EMBL/GenBank/DDBJ databases">
        <title>Sequence analysis of the mobA-ampS region of the Bacillus subtilis chromosome.</title>
        <authorList>
            <person name="Caldwell R.M."/>
            <person name="Ferrari E."/>
        </authorList>
    </citation>
    <scope>NUCLEOTIDE SEQUENCE [GENOMIC DNA]</scope>
    <source>
        <strain>168</strain>
    </source>
</reference>
<reference key="2">
    <citation type="journal article" date="1997" name="Nature">
        <title>The complete genome sequence of the Gram-positive bacterium Bacillus subtilis.</title>
        <authorList>
            <person name="Kunst F."/>
            <person name="Ogasawara N."/>
            <person name="Moszer I."/>
            <person name="Albertini A.M."/>
            <person name="Alloni G."/>
            <person name="Azevedo V."/>
            <person name="Bertero M.G."/>
            <person name="Bessieres P."/>
            <person name="Bolotin A."/>
            <person name="Borchert S."/>
            <person name="Borriss R."/>
            <person name="Boursier L."/>
            <person name="Brans A."/>
            <person name="Braun M."/>
            <person name="Brignell S.C."/>
            <person name="Bron S."/>
            <person name="Brouillet S."/>
            <person name="Bruschi C.V."/>
            <person name="Caldwell B."/>
            <person name="Capuano V."/>
            <person name="Carter N.M."/>
            <person name="Choi S.-K."/>
            <person name="Codani J.-J."/>
            <person name="Connerton I.F."/>
            <person name="Cummings N.J."/>
            <person name="Daniel R.A."/>
            <person name="Denizot F."/>
            <person name="Devine K.M."/>
            <person name="Duesterhoeft A."/>
            <person name="Ehrlich S.D."/>
            <person name="Emmerson P.T."/>
            <person name="Entian K.-D."/>
            <person name="Errington J."/>
            <person name="Fabret C."/>
            <person name="Ferrari E."/>
            <person name="Foulger D."/>
            <person name="Fritz C."/>
            <person name="Fujita M."/>
            <person name="Fujita Y."/>
            <person name="Fuma S."/>
            <person name="Galizzi A."/>
            <person name="Galleron N."/>
            <person name="Ghim S.-Y."/>
            <person name="Glaser P."/>
            <person name="Goffeau A."/>
            <person name="Golightly E.J."/>
            <person name="Grandi G."/>
            <person name="Guiseppi G."/>
            <person name="Guy B.J."/>
            <person name="Haga K."/>
            <person name="Haiech J."/>
            <person name="Harwood C.R."/>
            <person name="Henaut A."/>
            <person name="Hilbert H."/>
            <person name="Holsappel S."/>
            <person name="Hosono S."/>
            <person name="Hullo M.-F."/>
            <person name="Itaya M."/>
            <person name="Jones L.-M."/>
            <person name="Joris B."/>
            <person name="Karamata D."/>
            <person name="Kasahara Y."/>
            <person name="Klaerr-Blanchard M."/>
            <person name="Klein C."/>
            <person name="Kobayashi Y."/>
            <person name="Koetter P."/>
            <person name="Koningstein G."/>
            <person name="Krogh S."/>
            <person name="Kumano M."/>
            <person name="Kurita K."/>
            <person name="Lapidus A."/>
            <person name="Lardinois S."/>
            <person name="Lauber J."/>
            <person name="Lazarevic V."/>
            <person name="Lee S.-M."/>
            <person name="Levine A."/>
            <person name="Liu H."/>
            <person name="Masuda S."/>
            <person name="Mauel C."/>
            <person name="Medigue C."/>
            <person name="Medina N."/>
            <person name="Mellado R.P."/>
            <person name="Mizuno M."/>
            <person name="Moestl D."/>
            <person name="Nakai S."/>
            <person name="Noback M."/>
            <person name="Noone D."/>
            <person name="O'Reilly M."/>
            <person name="Ogawa K."/>
            <person name="Ogiwara A."/>
            <person name="Oudega B."/>
            <person name="Park S.-H."/>
            <person name="Parro V."/>
            <person name="Pohl T.M."/>
            <person name="Portetelle D."/>
            <person name="Porwollik S."/>
            <person name="Prescott A.M."/>
            <person name="Presecan E."/>
            <person name="Pujic P."/>
            <person name="Purnelle B."/>
            <person name="Rapoport G."/>
            <person name="Rey M."/>
            <person name="Reynolds S."/>
            <person name="Rieger M."/>
            <person name="Rivolta C."/>
            <person name="Rocha E."/>
            <person name="Roche B."/>
            <person name="Rose M."/>
            <person name="Sadaie Y."/>
            <person name="Sato T."/>
            <person name="Scanlan E."/>
            <person name="Schleich S."/>
            <person name="Schroeter R."/>
            <person name="Scoffone F."/>
            <person name="Sekiguchi J."/>
            <person name="Sekowska A."/>
            <person name="Seror S.J."/>
            <person name="Serror P."/>
            <person name="Shin B.-S."/>
            <person name="Soldo B."/>
            <person name="Sorokin A."/>
            <person name="Tacconi E."/>
            <person name="Takagi T."/>
            <person name="Takahashi H."/>
            <person name="Takemaru K."/>
            <person name="Takeuchi M."/>
            <person name="Tamakoshi A."/>
            <person name="Tanaka T."/>
            <person name="Terpstra P."/>
            <person name="Tognoni A."/>
            <person name="Tosato V."/>
            <person name="Uchiyama S."/>
            <person name="Vandenbol M."/>
            <person name="Vannier F."/>
            <person name="Vassarotti A."/>
            <person name="Viari A."/>
            <person name="Wambutt R."/>
            <person name="Wedler E."/>
            <person name="Wedler H."/>
            <person name="Weitzenegger T."/>
            <person name="Winters P."/>
            <person name="Wipat A."/>
            <person name="Yamamoto H."/>
            <person name="Yamane K."/>
            <person name="Yasumoto K."/>
            <person name="Yata K."/>
            <person name="Yoshida K."/>
            <person name="Yoshikawa H.-F."/>
            <person name="Zumstein E."/>
            <person name="Yoshikawa H."/>
            <person name="Danchin A."/>
        </authorList>
    </citation>
    <scope>NUCLEOTIDE SEQUENCE [LARGE SCALE GENOMIC DNA]</scope>
    <source>
        <strain>168</strain>
    </source>
</reference>
<keyword id="KW-1003">Cell membrane</keyword>
<keyword id="KW-0472">Membrane</keyword>
<keyword id="KW-1185">Reference proteome</keyword>
<keyword id="KW-0812">Transmembrane</keyword>
<keyword id="KW-1133">Transmembrane helix</keyword>
<gene>
    <name type="primary">ykoA</name>
    <name type="ordered locus">BSU14420</name>
</gene>
<organism>
    <name type="scientific">Bacillus subtilis (strain 168)</name>
    <dbReference type="NCBI Taxonomy" id="224308"/>
    <lineage>
        <taxon>Bacteria</taxon>
        <taxon>Bacillati</taxon>
        <taxon>Bacillota</taxon>
        <taxon>Bacilli</taxon>
        <taxon>Bacillales</taxon>
        <taxon>Bacillaceae</taxon>
        <taxon>Bacillus</taxon>
    </lineage>
</organism>
<comment type="subcellular location">
    <subcellularLocation>
        <location evidence="2">Cell membrane</location>
        <topology evidence="2">Multi-pass membrane protein</topology>
    </subcellularLocation>
</comment>
<protein>
    <recommendedName>
        <fullName>Uncharacterized protein YkoA</fullName>
    </recommendedName>
</protein>